<accession>A4TMT8</accession>
<protein>
    <recommendedName>
        <fullName evidence="1">Cytoskeleton protein RodZ</fullName>
    </recommendedName>
</protein>
<organism>
    <name type="scientific">Yersinia pestis (strain Pestoides F)</name>
    <dbReference type="NCBI Taxonomy" id="386656"/>
    <lineage>
        <taxon>Bacteria</taxon>
        <taxon>Pseudomonadati</taxon>
        <taxon>Pseudomonadota</taxon>
        <taxon>Gammaproteobacteria</taxon>
        <taxon>Enterobacterales</taxon>
        <taxon>Yersiniaceae</taxon>
        <taxon>Yersinia</taxon>
    </lineage>
</organism>
<feature type="chain" id="PRO_0000361870" description="Cytoskeleton protein RodZ">
    <location>
        <begin position="1"/>
        <end position="345"/>
    </location>
</feature>
<feature type="topological domain" description="Cytoplasmic" evidence="1">
    <location>
        <begin position="1"/>
        <end position="111"/>
    </location>
</feature>
<feature type="transmembrane region" description="Helical; Signal-anchor for type II membrane protein" evidence="1">
    <location>
        <begin position="112"/>
        <end position="132"/>
    </location>
</feature>
<feature type="topological domain" description="Periplasmic" evidence="1">
    <location>
        <begin position="133"/>
        <end position="345"/>
    </location>
</feature>
<feature type="domain" description="HTH cro/C1-type" evidence="1">
    <location>
        <begin position="19"/>
        <end position="79"/>
    </location>
</feature>
<feature type="DNA-binding region" description="H-T-H motif" evidence="1">
    <location>
        <begin position="30"/>
        <end position="49"/>
    </location>
</feature>
<feature type="region of interest" description="Disordered" evidence="2">
    <location>
        <begin position="151"/>
        <end position="260"/>
    </location>
</feature>
<feature type="compositionally biased region" description="Polar residues" evidence="2">
    <location>
        <begin position="188"/>
        <end position="225"/>
    </location>
</feature>
<feature type="compositionally biased region" description="Low complexity" evidence="2">
    <location>
        <begin position="229"/>
        <end position="241"/>
    </location>
</feature>
<reference key="1">
    <citation type="submission" date="2007-02" db="EMBL/GenBank/DDBJ databases">
        <title>Complete sequence of chromosome of Yersinia pestis Pestoides F.</title>
        <authorList>
            <consortium name="US DOE Joint Genome Institute"/>
            <person name="Copeland A."/>
            <person name="Lucas S."/>
            <person name="Lapidus A."/>
            <person name="Barry K."/>
            <person name="Detter J.C."/>
            <person name="Glavina del Rio T."/>
            <person name="Hammon N."/>
            <person name="Israni S."/>
            <person name="Dalin E."/>
            <person name="Tice H."/>
            <person name="Pitluck S."/>
            <person name="Di Bartolo G."/>
            <person name="Chain P."/>
            <person name="Malfatti S."/>
            <person name="Shin M."/>
            <person name="Vergez L."/>
            <person name="Schmutz J."/>
            <person name="Larimer F."/>
            <person name="Land M."/>
            <person name="Hauser L."/>
            <person name="Worsham P."/>
            <person name="Chu M."/>
            <person name="Bearden S."/>
            <person name="Garcia E."/>
            <person name="Richardson P."/>
        </authorList>
    </citation>
    <scope>NUCLEOTIDE SEQUENCE [LARGE SCALE GENOMIC DNA]</scope>
    <source>
        <strain>Pestoides F</strain>
    </source>
</reference>
<dbReference type="EMBL" id="CP000668">
    <property type="protein sequence ID" value="ABP40600.1"/>
    <property type="molecule type" value="Genomic_DNA"/>
</dbReference>
<dbReference type="RefSeq" id="WP_011906326.1">
    <property type="nucleotide sequence ID" value="NZ_CP009715.1"/>
</dbReference>
<dbReference type="SMR" id="A4TMT8"/>
<dbReference type="KEGG" id="ypp:YPDSF_2225"/>
<dbReference type="PATRIC" id="fig|386656.14.peg.3713"/>
<dbReference type="GO" id="GO:0005886">
    <property type="term" value="C:plasma membrane"/>
    <property type="evidence" value="ECO:0007669"/>
    <property type="project" value="UniProtKB-SubCell"/>
</dbReference>
<dbReference type="GO" id="GO:0003677">
    <property type="term" value="F:DNA binding"/>
    <property type="evidence" value="ECO:0007669"/>
    <property type="project" value="UniProtKB-KW"/>
</dbReference>
<dbReference type="GO" id="GO:0008360">
    <property type="term" value="P:regulation of cell shape"/>
    <property type="evidence" value="ECO:0007669"/>
    <property type="project" value="UniProtKB-UniRule"/>
</dbReference>
<dbReference type="CDD" id="cd00093">
    <property type="entry name" value="HTH_XRE"/>
    <property type="match status" value="1"/>
</dbReference>
<dbReference type="Gene3D" id="1.10.260.40">
    <property type="entry name" value="lambda repressor-like DNA-binding domains"/>
    <property type="match status" value="1"/>
</dbReference>
<dbReference type="HAMAP" id="MF_02017">
    <property type="entry name" value="RodZ"/>
    <property type="match status" value="1"/>
</dbReference>
<dbReference type="InterPro" id="IPR050400">
    <property type="entry name" value="Bact_Cytoskel_RodZ"/>
</dbReference>
<dbReference type="InterPro" id="IPR001387">
    <property type="entry name" value="Cro/C1-type_HTH"/>
</dbReference>
<dbReference type="InterPro" id="IPR010982">
    <property type="entry name" value="Lambda_DNA-bd_dom_sf"/>
</dbReference>
<dbReference type="InterPro" id="IPR023690">
    <property type="entry name" value="RodZ"/>
</dbReference>
<dbReference type="InterPro" id="IPR025194">
    <property type="entry name" value="RodZ-like_C"/>
</dbReference>
<dbReference type="NCBIfam" id="NF008109">
    <property type="entry name" value="PRK10856.1"/>
    <property type="match status" value="1"/>
</dbReference>
<dbReference type="PANTHER" id="PTHR34475">
    <property type="match status" value="1"/>
</dbReference>
<dbReference type="PANTHER" id="PTHR34475:SF1">
    <property type="entry name" value="CYTOSKELETON PROTEIN RODZ"/>
    <property type="match status" value="1"/>
</dbReference>
<dbReference type="Pfam" id="PF13413">
    <property type="entry name" value="HTH_25"/>
    <property type="match status" value="1"/>
</dbReference>
<dbReference type="Pfam" id="PF13464">
    <property type="entry name" value="RodZ_C"/>
    <property type="match status" value="1"/>
</dbReference>
<dbReference type="SMART" id="SM00530">
    <property type="entry name" value="HTH_XRE"/>
    <property type="match status" value="1"/>
</dbReference>
<dbReference type="SUPFAM" id="SSF47413">
    <property type="entry name" value="lambda repressor-like DNA-binding domains"/>
    <property type="match status" value="1"/>
</dbReference>
<dbReference type="PROSITE" id="PS50943">
    <property type="entry name" value="HTH_CROC1"/>
    <property type="match status" value="1"/>
</dbReference>
<proteinExistence type="inferred from homology"/>
<gene>
    <name evidence="1" type="primary">rodZ</name>
    <name type="ordered locus">YPDSF_2225</name>
</gene>
<keyword id="KW-0997">Cell inner membrane</keyword>
<keyword id="KW-1003">Cell membrane</keyword>
<keyword id="KW-0133">Cell shape</keyword>
<keyword id="KW-0238">DNA-binding</keyword>
<keyword id="KW-0472">Membrane</keyword>
<keyword id="KW-0735">Signal-anchor</keyword>
<keyword id="KW-0812">Transmembrane</keyword>
<keyword id="KW-1133">Transmembrane helix</keyword>
<evidence type="ECO:0000255" key="1">
    <source>
        <dbReference type="HAMAP-Rule" id="MF_02017"/>
    </source>
</evidence>
<evidence type="ECO:0000256" key="2">
    <source>
        <dbReference type="SAM" id="MobiDB-lite"/>
    </source>
</evidence>
<name>RODZ_YERPP</name>
<sequence length="345" mass="36394">MNTEASQDQTVTETPGVRLRQARESLGLTQQTVAERLCLKVSTIRDIEEDNAQANLASTFHRGYIRSYAKLVHLPEDELLPILEKQAPVRAAKVAPMQSFSLGKKHKKRDGWLMSFTWLIVLVVLGLTGAWWWQNHQAQQAEIANMVDQSSAQLSQNGGQPVPLTDDNSDAIAPTDAPAPVANGQPVPLTNHSGSAITNSATTSSVPKTTSTEPVDTANTNTTMHQEGAASAAVSPSQVPQPGMPTGQPPLPTADAGVSGSASSVGALVMNFTADCWLQVVDATGKTLFSGIQKGGAVLNLAGKAPYKLTIGAPGALTISYQGNPVDLSKFIKANRVARLTVGVE</sequence>
<comment type="function">
    <text evidence="1">Cytoskeletal protein that is involved in cell-shape control through regulation of the length of the long axis.</text>
</comment>
<comment type="subcellular location">
    <subcellularLocation>
        <location evidence="1">Cell inner membrane</location>
        <topology evidence="1">Single-pass type II membrane protein</topology>
    </subcellularLocation>
    <text evidence="1">Forms helical filaments along the long axis of the cell.</text>
</comment>
<comment type="domain">
    <text evidence="1">The helix-turn-helix (HTH) motif in the cytoplasmic domain of the N-terminus is involved in the formation of spirals to maintain the rigid rod shape. As this protein is anchored in the cytoplasmic membrane, the HTH motif may contribute to protein-protein interactions to form the RodZ helix, which is localized beneath the cytoplasmic membrane. The C-terminal domain may be critical for determination of the rod shape by probably interacting with enzymes required for synthesis of the peptidoglycan layer, including PBPs in the periplasm.</text>
</comment>
<comment type="similarity">
    <text evidence="1">Belongs to the RodZ family.</text>
</comment>